<name>PR3CB_DANRE</name>
<comment type="function">
    <text evidence="1">Acts as a glycogen-targeting subunit for PP1 and regulates its activity. Activates glycogen synthase, reduces glycogen phosphorylase activity and limits glycogen breakdown (By similarity).</text>
</comment>
<comment type="subunit">
    <text evidence="1">Interacts with PPP1CC catalytic subunit of PP1 and associates with glycogen. Forms complexes with glycogen phosphorylase, glycogen synthase and phosphorylase kinase which is necessary for its regulation of PP1 activity (By similarity).</text>
</comment>
<comment type="domain">
    <text evidence="1">The N-terminal region is required for binding to PP1, the central region is required for binding to glycogen and the C-terminal region is required for binding to glycogen phosphorylase, glycogen synthase and phosphorylase kinase.</text>
</comment>
<keyword id="KW-0119">Carbohydrate metabolism</keyword>
<keyword id="KW-0321">Glycogen metabolism</keyword>
<keyword id="KW-1185">Reference proteome</keyword>
<evidence type="ECO:0000250" key="1">
    <source>
        <dbReference type="UniProtKB" id="Q7TMB3"/>
    </source>
</evidence>
<evidence type="ECO:0000255" key="2">
    <source>
        <dbReference type="PROSITE-ProRule" id="PRU00491"/>
    </source>
</evidence>
<evidence type="ECO:0000312" key="3">
    <source>
        <dbReference type="EMBL" id="AAH60926.1"/>
    </source>
</evidence>
<proteinExistence type="evidence at transcript level"/>
<reference evidence="3" key="1">
    <citation type="submission" date="2003-11" db="EMBL/GenBank/DDBJ databases">
        <authorList>
            <consortium name="NIH - Zebrafish Gene Collection (ZGC) project"/>
        </authorList>
    </citation>
    <scope>NUCLEOTIDE SEQUENCE [LARGE SCALE MRNA]</scope>
    <source>
        <tissue evidence="3">Retina</tissue>
    </source>
</reference>
<gene>
    <name type="primary">ppp1r3cb</name>
    <name type="ORF">zgc:73259</name>
</gene>
<accession>Q6P950</accession>
<protein>
    <recommendedName>
        <fullName>Protein phosphatase 1 regulatory subunit 3C-B</fullName>
    </recommendedName>
</protein>
<organism>
    <name type="scientific">Danio rerio</name>
    <name type="common">Zebrafish</name>
    <name type="synonym">Brachydanio rerio</name>
    <dbReference type="NCBI Taxonomy" id="7955"/>
    <lineage>
        <taxon>Eukaryota</taxon>
        <taxon>Metazoa</taxon>
        <taxon>Chordata</taxon>
        <taxon>Craniata</taxon>
        <taxon>Vertebrata</taxon>
        <taxon>Euteleostomi</taxon>
        <taxon>Actinopterygii</taxon>
        <taxon>Neopterygii</taxon>
        <taxon>Teleostei</taxon>
        <taxon>Ostariophysi</taxon>
        <taxon>Cypriniformes</taxon>
        <taxon>Danionidae</taxon>
        <taxon>Danioninae</taxon>
        <taxon>Danio</taxon>
    </lineage>
</organism>
<feature type="chain" id="PRO_0000285930" description="Protein phosphatase 1 regulatory subunit 3C-B">
    <location>
        <begin position="1"/>
        <end position="317"/>
    </location>
</feature>
<feature type="domain" description="CBM21" evidence="2">
    <location>
        <begin position="150"/>
        <end position="258"/>
    </location>
</feature>
<sequence length="317" mass="36323">MNCTRVLQILNPRPMPSPIMPVDVAMRICLAHSPPLRSFLSSYEDCKSRNLVNQYKPLRSCISSKTEDDTANITWKSPETKAKKKVVFADSKGMSLTAVHVFKEFEEDLMLDLQFELSDLEDAIVGLKAEKEKNFSLGFPQPAADYLDFRNRLKKNLVCLENCIIQERSVTGTVKVSNVSFEKVVHVRITFDSWKSHTDIPCTYMNNVYGCEDVDTFSFSIDLPSFVAPHEQVEFCLSYKTHDMTYWDNNDGKNYKLVHTENDSSQASVIQNATTDFKAQGKRPDMEFDQFGSPRTSSGFFPEWQSWGHIENNTPYW</sequence>
<dbReference type="EMBL" id="BC060926">
    <property type="protein sequence ID" value="AAH60926.1"/>
    <property type="molecule type" value="mRNA"/>
</dbReference>
<dbReference type="RefSeq" id="NP_957128.1">
    <property type="nucleotide sequence ID" value="NM_200834.1"/>
</dbReference>
<dbReference type="SMR" id="Q6P950"/>
<dbReference type="FunCoup" id="Q6P950">
    <property type="interactions" value="336"/>
</dbReference>
<dbReference type="STRING" id="7955.ENSDARP00000014980"/>
<dbReference type="CAZy" id="CBM21">
    <property type="family name" value="Carbohydrate-Binding Module Family 21"/>
</dbReference>
<dbReference type="PaxDb" id="7955-ENSDARP00000014980"/>
<dbReference type="GeneID" id="393807"/>
<dbReference type="KEGG" id="dre:393807"/>
<dbReference type="AGR" id="ZFIN:ZDB-GENE-040426-1733"/>
<dbReference type="CTD" id="393807"/>
<dbReference type="ZFIN" id="ZDB-GENE-040426-1733">
    <property type="gene designation" value="ppp1r3cb"/>
</dbReference>
<dbReference type="eggNOG" id="KOG3986">
    <property type="taxonomic scope" value="Eukaryota"/>
</dbReference>
<dbReference type="InParanoid" id="Q6P950"/>
<dbReference type="OrthoDB" id="8942186at2759"/>
<dbReference type="PhylomeDB" id="Q6P950"/>
<dbReference type="Reactome" id="R-DRE-3322077">
    <property type="pathway name" value="Glycogen synthesis"/>
</dbReference>
<dbReference type="PRO" id="PR:Q6P950"/>
<dbReference type="Proteomes" id="UP000000437">
    <property type="component" value="Chromosome 12"/>
</dbReference>
<dbReference type="GO" id="GO:0000164">
    <property type="term" value="C:protein phosphatase type 1 complex"/>
    <property type="evidence" value="ECO:0000318"/>
    <property type="project" value="GO_Central"/>
</dbReference>
<dbReference type="GO" id="GO:2001069">
    <property type="term" value="F:glycogen binding"/>
    <property type="evidence" value="ECO:0000318"/>
    <property type="project" value="GO_Central"/>
</dbReference>
<dbReference type="GO" id="GO:0008157">
    <property type="term" value="F:protein phosphatase 1 binding"/>
    <property type="evidence" value="ECO:0000318"/>
    <property type="project" value="GO_Central"/>
</dbReference>
<dbReference type="GO" id="GO:0019903">
    <property type="term" value="F:protein phosphatase binding"/>
    <property type="evidence" value="ECO:0000250"/>
    <property type="project" value="UniProtKB"/>
</dbReference>
<dbReference type="GO" id="GO:0005978">
    <property type="term" value="P:glycogen biosynthetic process"/>
    <property type="evidence" value="ECO:0000250"/>
    <property type="project" value="UniProtKB"/>
</dbReference>
<dbReference type="GO" id="GO:0005977">
    <property type="term" value="P:glycogen metabolic process"/>
    <property type="evidence" value="ECO:0000250"/>
    <property type="project" value="UniProtKB"/>
</dbReference>
<dbReference type="GO" id="GO:0005979">
    <property type="term" value="P:regulation of glycogen biosynthetic process"/>
    <property type="evidence" value="ECO:0000318"/>
    <property type="project" value="GO_Central"/>
</dbReference>
<dbReference type="CDD" id="cd22815">
    <property type="entry name" value="PBD_PPP1R3C"/>
    <property type="match status" value="1"/>
</dbReference>
<dbReference type="FunFam" id="2.60.40.2440:FF:000001">
    <property type="entry name" value="Protein phosphatase 1 regulatory subunit 3C"/>
    <property type="match status" value="1"/>
</dbReference>
<dbReference type="Gene3D" id="2.60.40.2440">
    <property type="entry name" value="Carbohydrate binding type-21 domain"/>
    <property type="match status" value="1"/>
</dbReference>
<dbReference type="InterPro" id="IPR005036">
    <property type="entry name" value="CBM21_dom"/>
</dbReference>
<dbReference type="InterPro" id="IPR038175">
    <property type="entry name" value="CBM21_dom_sf"/>
</dbReference>
<dbReference type="InterPro" id="IPR017434">
    <property type="entry name" value="Pase-1_reg-su_3B/C/D_met"/>
</dbReference>
<dbReference type="InterPro" id="IPR030683">
    <property type="entry name" value="PP1_3C"/>
</dbReference>
<dbReference type="InterPro" id="IPR050782">
    <property type="entry name" value="PP1_regulatory_subunit_3"/>
</dbReference>
<dbReference type="PANTHER" id="PTHR12307">
    <property type="entry name" value="PROTEIN PHOSPHATASE 1 REGULATORY SUBUNIT"/>
    <property type="match status" value="1"/>
</dbReference>
<dbReference type="PANTHER" id="PTHR12307:SF15">
    <property type="entry name" value="PROTEIN PHOSPHATASE 1 REGULATORY SUBUNIT 3C"/>
    <property type="match status" value="1"/>
</dbReference>
<dbReference type="Pfam" id="PF03370">
    <property type="entry name" value="CBM_21"/>
    <property type="match status" value="1"/>
</dbReference>
<dbReference type="PIRSF" id="PIRSF038207">
    <property type="entry name" value="PP1_GT_animal"/>
    <property type="match status" value="1"/>
</dbReference>
<dbReference type="PIRSF" id="PIRSF500813">
    <property type="entry name" value="PP1_PTG"/>
    <property type="match status" value="1"/>
</dbReference>
<dbReference type="PROSITE" id="PS51159">
    <property type="entry name" value="CBM21"/>
    <property type="match status" value="1"/>
</dbReference>